<accession>Q88QG4</accession>
<protein>
    <recommendedName>
        <fullName evidence="1">3,4-dihydroxy-2-butanone 4-phosphate synthase</fullName>
        <shortName evidence="1">DHBP synthase</shortName>
        <ecNumber evidence="1">4.1.99.12</ecNumber>
    </recommendedName>
</protein>
<comment type="function">
    <text evidence="1">Catalyzes the conversion of D-ribulose 5-phosphate to formate and 3,4-dihydroxy-2-butanone 4-phosphate.</text>
</comment>
<comment type="catalytic activity">
    <reaction evidence="1">
        <text>D-ribulose 5-phosphate = (2S)-2-hydroxy-3-oxobutyl phosphate + formate + H(+)</text>
        <dbReference type="Rhea" id="RHEA:18457"/>
        <dbReference type="ChEBI" id="CHEBI:15378"/>
        <dbReference type="ChEBI" id="CHEBI:15740"/>
        <dbReference type="ChEBI" id="CHEBI:58121"/>
        <dbReference type="ChEBI" id="CHEBI:58830"/>
        <dbReference type="EC" id="4.1.99.12"/>
    </reaction>
</comment>
<comment type="cofactor">
    <cofactor evidence="1">
        <name>Mg(2+)</name>
        <dbReference type="ChEBI" id="CHEBI:18420"/>
    </cofactor>
    <cofactor evidence="1">
        <name>Mn(2+)</name>
        <dbReference type="ChEBI" id="CHEBI:29035"/>
    </cofactor>
    <text evidence="1">Binds 2 divalent metal cations per subunit. Magnesium or manganese.</text>
</comment>
<comment type="pathway">
    <text evidence="1">Cofactor biosynthesis; riboflavin biosynthesis; 2-hydroxy-3-oxobutyl phosphate from D-ribulose 5-phosphate: step 1/1.</text>
</comment>
<comment type="subunit">
    <text evidence="1">Homodimer.</text>
</comment>
<comment type="similarity">
    <text evidence="1">Belongs to the DHBP synthase family.</text>
</comment>
<keyword id="KW-0456">Lyase</keyword>
<keyword id="KW-0460">Magnesium</keyword>
<keyword id="KW-0464">Manganese</keyword>
<keyword id="KW-0479">Metal-binding</keyword>
<keyword id="KW-1185">Reference proteome</keyword>
<keyword id="KW-0686">Riboflavin biosynthesis</keyword>
<proteinExistence type="inferred from homology"/>
<gene>
    <name evidence="1" type="primary">ribB</name>
    <name type="ordered locus">PP_0530</name>
</gene>
<organism>
    <name type="scientific">Pseudomonas putida (strain ATCC 47054 / DSM 6125 / CFBP 8728 / NCIMB 11950 / KT2440)</name>
    <dbReference type="NCBI Taxonomy" id="160488"/>
    <lineage>
        <taxon>Bacteria</taxon>
        <taxon>Pseudomonadati</taxon>
        <taxon>Pseudomonadota</taxon>
        <taxon>Gammaproteobacteria</taxon>
        <taxon>Pseudomonadales</taxon>
        <taxon>Pseudomonadaceae</taxon>
        <taxon>Pseudomonas</taxon>
    </lineage>
</organism>
<sequence>MFTQHHAQFPNVSAAIAAFQAGRPVLLLDDDDREDEADIIAAAENITLQTMAMMIRDCSGIVCLCLDEATVDELQLAPMVQNNQARHGTGFTVTIEAAEGITTGVSAQDRITTIDAALRSSAEQRHIVSPGHVFPLRARNGGVLTRRGHTEGSVDLARLAGLRPAAVLCELMNPDGSMARGEQVAVYARQYNLPVLTIEELARYREAMLEREAEPA</sequence>
<reference key="1">
    <citation type="journal article" date="2002" name="Environ. Microbiol.">
        <title>Complete genome sequence and comparative analysis of the metabolically versatile Pseudomonas putida KT2440.</title>
        <authorList>
            <person name="Nelson K.E."/>
            <person name="Weinel C."/>
            <person name="Paulsen I.T."/>
            <person name="Dodson R.J."/>
            <person name="Hilbert H."/>
            <person name="Martins dos Santos V.A.P."/>
            <person name="Fouts D.E."/>
            <person name="Gill S.R."/>
            <person name="Pop M."/>
            <person name="Holmes M."/>
            <person name="Brinkac L.M."/>
            <person name="Beanan M.J."/>
            <person name="DeBoy R.T."/>
            <person name="Daugherty S.C."/>
            <person name="Kolonay J.F."/>
            <person name="Madupu R."/>
            <person name="Nelson W.C."/>
            <person name="White O."/>
            <person name="Peterson J.D."/>
            <person name="Khouri H.M."/>
            <person name="Hance I."/>
            <person name="Chris Lee P."/>
            <person name="Holtzapple E.K."/>
            <person name="Scanlan D."/>
            <person name="Tran K."/>
            <person name="Moazzez A."/>
            <person name="Utterback T.R."/>
            <person name="Rizzo M."/>
            <person name="Lee K."/>
            <person name="Kosack D."/>
            <person name="Moestl D."/>
            <person name="Wedler H."/>
            <person name="Lauber J."/>
            <person name="Stjepandic D."/>
            <person name="Hoheisel J."/>
            <person name="Straetz M."/>
            <person name="Heim S."/>
            <person name="Kiewitz C."/>
            <person name="Eisen J.A."/>
            <person name="Timmis K.N."/>
            <person name="Duesterhoeft A."/>
            <person name="Tuemmler B."/>
            <person name="Fraser C.M."/>
        </authorList>
    </citation>
    <scope>NUCLEOTIDE SEQUENCE [LARGE SCALE GENOMIC DNA]</scope>
    <source>
        <strain>ATCC 47054 / DSM 6125 / CFBP 8728 / NCIMB 11950 / KT2440</strain>
    </source>
</reference>
<evidence type="ECO:0000255" key="1">
    <source>
        <dbReference type="HAMAP-Rule" id="MF_00180"/>
    </source>
</evidence>
<name>RIBB_PSEPK</name>
<dbReference type="EC" id="4.1.99.12" evidence="1"/>
<dbReference type="EMBL" id="AE015451">
    <property type="protein sequence ID" value="AAN66157.1"/>
    <property type="molecule type" value="Genomic_DNA"/>
</dbReference>
<dbReference type="RefSeq" id="NP_742693.1">
    <property type="nucleotide sequence ID" value="NC_002947.4"/>
</dbReference>
<dbReference type="RefSeq" id="WP_010951811.1">
    <property type="nucleotide sequence ID" value="NZ_CP169744.1"/>
</dbReference>
<dbReference type="SMR" id="Q88QG4"/>
<dbReference type="STRING" id="160488.PP_0530"/>
<dbReference type="PaxDb" id="160488-PP_0530"/>
<dbReference type="GeneID" id="83677829"/>
<dbReference type="KEGG" id="ppu:PP_0530"/>
<dbReference type="PATRIC" id="fig|160488.4.peg.566"/>
<dbReference type="eggNOG" id="COG0108">
    <property type="taxonomic scope" value="Bacteria"/>
</dbReference>
<dbReference type="HOGENOM" id="CLU_020273_3_0_6"/>
<dbReference type="OrthoDB" id="9793111at2"/>
<dbReference type="PhylomeDB" id="Q88QG4"/>
<dbReference type="BioCyc" id="PPUT160488:G1G01-579-MONOMER"/>
<dbReference type="UniPathway" id="UPA00275">
    <property type="reaction ID" value="UER00399"/>
</dbReference>
<dbReference type="Proteomes" id="UP000000556">
    <property type="component" value="Chromosome"/>
</dbReference>
<dbReference type="GO" id="GO:0005829">
    <property type="term" value="C:cytosol"/>
    <property type="evidence" value="ECO:0007669"/>
    <property type="project" value="TreeGrafter"/>
</dbReference>
<dbReference type="GO" id="GO:0008686">
    <property type="term" value="F:3,4-dihydroxy-2-butanone-4-phosphate synthase activity"/>
    <property type="evidence" value="ECO:0007669"/>
    <property type="project" value="UniProtKB-UniRule"/>
</dbReference>
<dbReference type="GO" id="GO:0000287">
    <property type="term" value="F:magnesium ion binding"/>
    <property type="evidence" value="ECO:0007669"/>
    <property type="project" value="UniProtKB-UniRule"/>
</dbReference>
<dbReference type="GO" id="GO:0030145">
    <property type="term" value="F:manganese ion binding"/>
    <property type="evidence" value="ECO:0007669"/>
    <property type="project" value="UniProtKB-UniRule"/>
</dbReference>
<dbReference type="GO" id="GO:0009231">
    <property type="term" value="P:riboflavin biosynthetic process"/>
    <property type="evidence" value="ECO:0007669"/>
    <property type="project" value="UniProtKB-UniRule"/>
</dbReference>
<dbReference type="FunFam" id="3.90.870.10:FF:000002">
    <property type="entry name" value="3,4-dihydroxy-2-butanone 4-phosphate synthase"/>
    <property type="match status" value="1"/>
</dbReference>
<dbReference type="Gene3D" id="3.90.870.10">
    <property type="entry name" value="DHBP synthase"/>
    <property type="match status" value="1"/>
</dbReference>
<dbReference type="HAMAP" id="MF_00180">
    <property type="entry name" value="RibB"/>
    <property type="match status" value="1"/>
</dbReference>
<dbReference type="InterPro" id="IPR017945">
    <property type="entry name" value="DHBP_synth_RibB-like_a/b_dom"/>
</dbReference>
<dbReference type="InterPro" id="IPR000422">
    <property type="entry name" value="DHBP_synthase_RibB"/>
</dbReference>
<dbReference type="NCBIfam" id="TIGR00506">
    <property type="entry name" value="ribB"/>
    <property type="match status" value="1"/>
</dbReference>
<dbReference type="PANTHER" id="PTHR21327:SF38">
    <property type="entry name" value="3,4-DIHYDROXY-2-BUTANONE 4-PHOSPHATE SYNTHASE"/>
    <property type="match status" value="1"/>
</dbReference>
<dbReference type="PANTHER" id="PTHR21327">
    <property type="entry name" value="GTP CYCLOHYDROLASE II-RELATED"/>
    <property type="match status" value="1"/>
</dbReference>
<dbReference type="Pfam" id="PF00926">
    <property type="entry name" value="DHBP_synthase"/>
    <property type="match status" value="1"/>
</dbReference>
<dbReference type="SUPFAM" id="SSF55821">
    <property type="entry name" value="YrdC/RibB"/>
    <property type="match status" value="1"/>
</dbReference>
<feature type="chain" id="PRO_0000151807" description="3,4-dihydroxy-2-butanone 4-phosphate synthase">
    <location>
        <begin position="1"/>
        <end position="216"/>
    </location>
</feature>
<feature type="binding site" evidence="1">
    <location>
        <begin position="33"/>
        <end position="34"/>
    </location>
    <ligand>
        <name>D-ribulose 5-phosphate</name>
        <dbReference type="ChEBI" id="CHEBI:58121"/>
    </ligand>
</feature>
<feature type="binding site" evidence="1">
    <location>
        <position position="34"/>
    </location>
    <ligand>
        <name>Mg(2+)</name>
        <dbReference type="ChEBI" id="CHEBI:18420"/>
        <label>1</label>
    </ligand>
</feature>
<feature type="binding site" evidence="1">
    <location>
        <position position="34"/>
    </location>
    <ligand>
        <name>Mg(2+)</name>
        <dbReference type="ChEBI" id="CHEBI:18420"/>
        <label>2</label>
    </ligand>
</feature>
<feature type="binding site" evidence="1">
    <location>
        <position position="38"/>
    </location>
    <ligand>
        <name>D-ribulose 5-phosphate</name>
        <dbReference type="ChEBI" id="CHEBI:58121"/>
    </ligand>
</feature>
<feature type="binding site" evidence="1">
    <location>
        <begin position="146"/>
        <end position="150"/>
    </location>
    <ligand>
        <name>D-ribulose 5-phosphate</name>
        <dbReference type="ChEBI" id="CHEBI:58121"/>
    </ligand>
</feature>
<feature type="binding site" evidence="1">
    <location>
        <position position="149"/>
    </location>
    <ligand>
        <name>Mg(2+)</name>
        <dbReference type="ChEBI" id="CHEBI:18420"/>
        <label>2</label>
    </ligand>
</feature>
<feature type="binding site" evidence="1">
    <location>
        <position position="170"/>
    </location>
    <ligand>
        <name>D-ribulose 5-phosphate</name>
        <dbReference type="ChEBI" id="CHEBI:58121"/>
    </ligand>
</feature>
<feature type="site" description="Essential for catalytic activity" evidence="1">
    <location>
        <position position="132"/>
    </location>
</feature>
<feature type="site" description="Essential for catalytic activity" evidence="1">
    <location>
        <position position="170"/>
    </location>
</feature>